<accession>Q65361</accession>
<accession>O12551</accession>
<accession>O12840</accession>
<feature type="chain" id="PRO_0000132951" description="Uncharacterized 36.6 kDa protein">
    <location>
        <begin position="1"/>
        <end position="320"/>
    </location>
</feature>
<reference key="1">
    <citation type="journal article" date="1993" name="Virology">
        <title>Identification and characterization of a putative origin of DNA replication in the genome of a baculovirus pathogenic for Orgyia pseudotsugata.</title>
        <authorList>
            <person name="Pearson M.N."/>
            <person name="Bjornson R.M."/>
            <person name="Ahrens C.H."/>
            <person name="Rohrmann G.F."/>
        </authorList>
    </citation>
    <scope>NUCLEOTIDE SEQUENCE [GENOMIC DNA]</scope>
</reference>
<reference key="2">
    <citation type="journal article" date="1997" name="Virology">
        <title>The sequence of the Orgyia pseudotsugata multinucleocapsid nuclear polyhedrosis virus genome.</title>
        <authorList>
            <person name="Ahrens C.H."/>
            <person name="Russell R.R."/>
            <person name="Funk C.J."/>
            <person name="Evans J."/>
            <person name="Harwood S."/>
            <person name="Rohrmann G.F."/>
        </authorList>
    </citation>
    <scope>NUCLEOTIDE SEQUENCE [LARGE SCALE GENOMIC DNA]</scope>
</reference>
<protein>
    <recommendedName>
        <fullName>Uncharacterized 36.6 kDa protein</fullName>
    </recommendedName>
    <alternativeName>
        <fullName>ORF12</fullName>
    </alternativeName>
</protein>
<proteinExistence type="predicted"/>
<dbReference type="EMBL" id="D17353">
    <property type="protein sequence ID" value="BAA04170.1"/>
    <property type="molecule type" value="Genomic_DNA"/>
</dbReference>
<dbReference type="EMBL" id="U75930">
    <property type="protein sequence ID" value="AAC59011.1"/>
    <property type="molecule type" value="Genomic_DNA"/>
</dbReference>
<dbReference type="RefSeq" id="NP_046168.1">
    <property type="nucleotide sequence ID" value="NC_001875.2"/>
</dbReference>
<dbReference type="SMR" id="Q65361"/>
<dbReference type="KEGG" id="vg:912053"/>
<dbReference type="OrthoDB" id="7030at10239"/>
<dbReference type="Proteomes" id="UP000009248">
    <property type="component" value="Genome"/>
</dbReference>
<sequence length="320" mass="36563">MFSWMFGWWNAADEQVNAEFDEQAYRRYAVDQRAHSDLVRRDVFRCHPFVFKFRYVLDETAGRCCSVVDFCKGLKISHDLLQRCNFDRQHVRQLNELVLGAPPAQPDSLGSLFATKHGLVQLLQQFSFANKNEVLLAVGANKDHDRDNLLDKIEAVLNHVKTLNTNSDKFISAHKSFKLEVGARFEQFEQRLQTLDTKLNALQCAAPTRTAPGVVFPRDVTKHPHLAVFMGRVEDRGVTQIAFARGQEEHFRKRKLEFEEGMDVDVRGRAPNPLLAVHCIKEEFANGGHKIRRLPKKVIEVDCAVNVAKDIVKKAILNKT</sequence>
<keyword id="KW-1185">Reference proteome</keyword>
<name>Y013_NPVOP</name>
<organismHost>
    <name type="scientific">Orgyia pseudotsugata</name>
    <name type="common">Douglas-fir tussock moth</name>
    <dbReference type="NCBI Taxonomy" id="33414"/>
</organismHost>
<organism>
    <name type="scientific">Orgyia pseudotsugata multicapsid polyhedrosis virus</name>
    <name type="common">OpMNPV</name>
    <dbReference type="NCBI Taxonomy" id="262177"/>
    <lineage>
        <taxon>Viruses</taxon>
        <taxon>Viruses incertae sedis</taxon>
        <taxon>Naldaviricetes</taxon>
        <taxon>Lefavirales</taxon>
        <taxon>Baculoviridae</taxon>
        <taxon>Alphabaculovirus</taxon>
        <taxon>Alphabaculovirus orpseudotsugatae</taxon>
    </lineage>
</organism>
<gene>
    <name type="ORF">ORF12</name>
</gene>